<proteinExistence type="evidence at transcript level"/>
<keyword id="KW-0007">Acetylation</keyword>
<keyword id="KW-0965">Cell junction</keyword>
<keyword id="KW-1003">Cell membrane</keyword>
<keyword id="KW-0268">Exocytosis</keyword>
<keyword id="KW-0472">Membrane</keyword>
<keyword id="KW-0628">Postsynaptic cell membrane</keyword>
<keyword id="KW-0653">Protein transport</keyword>
<keyword id="KW-1185">Reference proteome</keyword>
<keyword id="KW-0770">Synapse</keyword>
<keyword id="KW-0796">Tight junction</keyword>
<keyword id="KW-0813">Transport</keyword>
<gene>
    <name type="primary">LIN7C</name>
</gene>
<reference key="1">
    <citation type="submission" date="2004-11" db="EMBL/GenBank/DDBJ databases">
        <authorList>
            <consortium name="The German cDNA consortium"/>
        </authorList>
    </citation>
    <scope>NUCLEOTIDE SEQUENCE [LARGE SCALE MRNA]</scope>
    <source>
        <tissue>Brain cortex</tissue>
    </source>
</reference>
<feature type="initiator methionine" description="Removed" evidence="3">
    <location>
        <position position="1"/>
    </location>
</feature>
<feature type="chain" id="PRO_0000238668" description="Protein lin-7 homolog C">
    <location>
        <begin position="2"/>
        <end position="197"/>
    </location>
</feature>
<feature type="domain" description="L27" evidence="5">
    <location>
        <begin position="10"/>
        <end position="65"/>
    </location>
</feature>
<feature type="domain" description="PDZ" evidence="4">
    <location>
        <begin position="93"/>
        <end position="175"/>
    </location>
</feature>
<feature type="short sequence motif" description="Kinase interacting site" evidence="1">
    <location>
        <begin position="2"/>
        <end position="13"/>
    </location>
</feature>
<feature type="modified residue" description="N-acetylalanine" evidence="3">
    <location>
        <position position="2"/>
    </location>
</feature>
<protein>
    <recommendedName>
        <fullName>Protein lin-7 homolog C</fullName>
        <shortName>Lin-7C</shortName>
    </recommendedName>
</protein>
<comment type="function">
    <text evidence="1 2">Plays a role in establishing and maintaining the asymmetric distribution of channels and receptors at the plasma membrane of polarized cells. Forms membrane-associated multiprotein complexes that may regulate delivery and recycling of proteins to the correct membrane domains. The tripartite complex composed of LIN7 (LIN7A, LIN7B or LIN7C), CASK and APBA1 associates with the motor protein KIF17 to transport vesicles containing N-methyl-D-aspartate (NMDA) receptor subunit NR2B along microtubules (By similarity). This complex may have the potential to couple synaptic vesicle exocytosis to cell adhesion in brain. Ensures the proper localization of GRIN2B (subunit 2B of the NMDA receptor) to neuronal postsynaptic density and may function in localizing synaptic vesicles at synapses where it is recruited by beta-catenin and cadherin. Required to localize Kir2 channels, GABA transporter (SLC6A12) and EGFR/ERBB1, ERBB2, ERBB3 and ERBB4 to the basolateral membrane of epithelial cells (By similarity).</text>
</comment>
<comment type="subunit">
    <text evidence="1 2">Forms a complex with CASK and APBA1 or CASKIN1. Component of the brain-specific heterotrimeric complex (LIN-10-LIN-2-LIN-7 complex) composed of at least APBA1, CASK, and LIN7, which associates with the motor protein KIF17 to transport vesicles along microtubules (By similarity). Can also interact with other modular proteins containing protein-protein interaction domains like PALS1, PALS2, MPP7, DLG1, DLG2 and DLG3 through its L27 domain. Interacts with DLG4 and GRIN2B as well as CDH1 and CTNNB1, the channels KCNJ12/Kir2.2, KCNJ4/Kir2.3 and probably KCNJ2/Kir2.1 and SLC6A12/BGT-1 via its PDZ domain. The association of LIN7A with cadherin and beta-catenin is calcium-dependent, occurs at synaptic junctions and requires the actin cytoskeleton. Interacts with EGFR, ERBB2, ERBB3 and ERBB4 with both PDZ and KID domains. Associates with KIF17 via APBA1. Interacts with HTR4. Forms a tripartite complex composed of DLG1, MPP7 and LIN7 (LIN7A or LIN7C) (By similarity). Interacts with MAPK12 (By similarity).</text>
</comment>
<comment type="subcellular location">
    <subcellularLocation>
        <location evidence="1">Cell membrane</location>
        <topology evidence="1">Peripheral membrane protein</topology>
    </subcellularLocation>
    <subcellularLocation>
        <location evidence="1">Basolateral cell membrane</location>
        <topology evidence="1">Peripheral membrane protein</topology>
    </subcellularLocation>
    <subcellularLocation>
        <location evidence="1">Cell junction</location>
    </subcellularLocation>
    <subcellularLocation>
        <location evidence="1">Postsynaptic density membrane</location>
        <topology evidence="1">Peripheral membrane protein</topology>
    </subcellularLocation>
    <subcellularLocation>
        <location evidence="1">Cell junction</location>
        <location evidence="1">Tight junction</location>
    </subcellularLocation>
    <text evidence="1">Mainly basolateral in renal epithelial cells.</text>
</comment>
<comment type="domain">
    <text evidence="1">The L27 domain mediates interaction with CASK and is involved in the formation of multimeric complexes and the association of LIN7 to membranes.</text>
</comment>
<comment type="domain">
    <text evidence="1">The PDZ domain regulates endocytosis and recycling of the receptor at the membrane.</text>
</comment>
<comment type="domain">
    <text evidence="1">The kinase interacting site is required for proper delivery of ERBB2 to the basolateral membrane.</text>
</comment>
<comment type="similarity">
    <text evidence="6">Belongs to the lin-7 family.</text>
</comment>
<organism>
    <name type="scientific">Pongo abelii</name>
    <name type="common">Sumatran orangutan</name>
    <name type="synonym">Pongo pygmaeus abelii</name>
    <dbReference type="NCBI Taxonomy" id="9601"/>
    <lineage>
        <taxon>Eukaryota</taxon>
        <taxon>Metazoa</taxon>
        <taxon>Chordata</taxon>
        <taxon>Craniata</taxon>
        <taxon>Vertebrata</taxon>
        <taxon>Euteleostomi</taxon>
        <taxon>Mammalia</taxon>
        <taxon>Eutheria</taxon>
        <taxon>Euarchontoglires</taxon>
        <taxon>Primates</taxon>
        <taxon>Haplorrhini</taxon>
        <taxon>Catarrhini</taxon>
        <taxon>Hominidae</taxon>
        <taxon>Pongo</taxon>
    </lineage>
</organism>
<dbReference type="EMBL" id="CR859113">
    <property type="protein sequence ID" value="CAH91305.1"/>
    <property type="molecule type" value="mRNA"/>
</dbReference>
<dbReference type="RefSeq" id="NP_001125773.1">
    <property type="nucleotide sequence ID" value="NM_001132301.1"/>
</dbReference>
<dbReference type="SMR" id="Q5RAA5"/>
<dbReference type="FunCoup" id="Q5RAA5">
    <property type="interactions" value="1477"/>
</dbReference>
<dbReference type="STRING" id="9601.ENSPPYP00000003906"/>
<dbReference type="GeneID" id="100172700"/>
<dbReference type="KEGG" id="pon:100172700"/>
<dbReference type="CTD" id="55327"/>
<dbReference type="eggNOG" id="KOG3550">
    <property type="taxonomic scope" value="Eukaryota"/>
</dbReference>
<dbReference type="HOGENOM" id="CLU_097962_0_0_1"/>
<dbReference type="InParanoid" id="Q5RAA5"/>
<dbReference type="OrthoDB" id="10056216at2759"/>
<dbReference type="TreeFam" id="TF316850"/>
<dbReference type="Proteomes" id="UP000001595">
    <property type="component" value="Chromosome 11"/>
</dbReference>
<dbReference type="GO" id="GO:0016323">
    <property type="term" value="C:basolateral plasma membrane"/>
    <property type="evidence" value="ECO:0007669"/>
    <property type="project" value="UniProtKB-SubCell"/>
</dbReference>
<dbReference type="GO" id="GO:0005923">
    <property type="term" value="C:bicellular tight junction"/>
    <property type="evidence" value="ECO:0007669"/>
    <property type="project" value="UniProtKB-SubCell"/>
</dbReference>
<dbReference type="GO" id="GO:0098839">
    <property type="term" value="C:postsynaptic density membrane"/>
    <property type="evidence" value="ECO:0007669"/>
    <property type="project" value="UniProtKB-SubCell"/>
</dbReference>
<dbReference type="GO" id="GO:0006887">
    <property type="term" value="P:exocytosis"/>
    <property type="evidence" value="ECO:0007669"/>
    <property type="project" value="UniProtKB-KW"/>
</dbReference>
<dbReference type="GO" id="GO:0015031">
    <property type="term" value="P:protein transport"/>
    <property type="evidence" value="ECO:0007669"/>
    <property type="project" value="UniProtKB-KW"/>
</dbReference>
<dbReference type="CDD" id="cd06796">
    <property type="entry name" value="PDZ_Lin-7-like"/>
    <property type="match status" value="1"/>
</dbReference>
<dbReference type="FunFam" id="2.30.42.10:FF:000076">
    <property type="entry name" value="Protein lin-7 homolog"/>
    <property type="match status" value="1"/>
</dbReference>
<dbReference type="Gene3D" id="2.30.42.10">
    <property type="match status" value="1"/>
</dbReference>
<dbReference type="Gene3D" id="1.10.287.650">
    <property type="entry name" value="L27 domain"/>
    <property type="match status" value="1"/>
</dbReference>
<dbReference type="InterPro" id="IPR014775">
    <property type="entry name" value="L27_C"/>
</dbReference>
<dbReference type="InterPro" id="IPR004172">
    <property type="entry name" value="L27_dom"/>
</dbReference>
<dbReference type="InterPro" id="IPR036892">
    <property type="entry name" value="L27_dom_sf"/>
</dbReference>
<dbReference type="InterPro" id="IPR017365">
    <property type="entry name" value="LIN7"/>
</dbReference>
<dbReference type="InterPro" id="IPR051109">
    <property type="entry name" value="MAM_complex_regulator"/>
</dbReference>
<dbReference type="InterPro" id="IPR001478">
    <property type="entry name" value="PDZ"/>
</dbReference>
<dbReference type="InterPro" id="IPR036034">
    <property type="entry name" value="PDZ_sf"/>
</dbReference>
<dbReference type="PANTHER" id="PTHR14063">
    <property type="entry name" value="PROTEIN LIN-7 HOMOLOG"/>
    <property type="match status" value="1"/>
</dbReference>
<dbReference type="Pfam" id="PF02828">
    <property type="entry name" value="L27"/>
    <property type="match status" value="1"/>
</dbReference>
<dbReference type="Pfam" id="PF00595">
    <property type="entry name" value="PDZ"/>
    <property type="match status" value="1"/>
</dbReference>
<dbReference type="PIRSF" id="PIRSF038039">
    <property type="entry name" value="Lin-7_homologue"/>
    <property type="match status" value="1"/>
</dbReference>
<dbReference type="SMART" id="SM00569">
    <property type="entry name" value="L27"/>
    <property type="match status" value="1"/>
</dbReference>
<dbReference type="SMART" id="SM00228">
    <property type="entry name" value="PDZ"/>
    <property type="match status" value="1"/>
</dbReference>
<dbReference type="SUPFAM" id="SSF101288">
    <property type="entry name" value="L27 domain"/>
    <property type="match status" value="1"/>
</dbReference>
<dbReference type="SUPFAM" id="SSF50156">
    <property type="entry name" value="PDZ domain-like"/>
    <property type="match status" value="1"/>
</dbReference>
<dbReference type="PROSITE" id="PS51022">
    <property type="entry name" value="L27"/>
    <property type="match status" value="1"/>
</dbReference>
<dbReference type="PROSITE" id="PS50106">
    <property type="entry name" value="PDZ"/>
    <property type="match status" value="1"/>
</dbReference>
<evidence type="ECO:0000250" key="1"/>
<evidence type="ECO:0000250" key="2">
    <source>
        <dbReference type="UniProtKB" id="O88952"/>
    </source>
</evidence>
<evidence type="ECO:0000250" key="3">
    <source>
        <dbReference type="UniProtKB" id="Q9NUP9"/>
    </source>
</evidence>
<evidence type="ECO:0000255" key="4">
    <source>
        <dbReference type="PROSITE-ProRule" id="PRU00143"/>
    </source>
</evidence>
<evidence type="ECO:0000255" key="5">
    <source>
        <dbReference type="PROSITE-ProRule" id="PRU00365"/>
    </source>
</evidence>
<evidence type="ECO:0000305" key="6"/>
<name>LIN7C_PONAB</name>
<accession>Q5RAA5</accession>
<sequence length="197" mass="21834">MAALGEPVRLERDICRAIELLEKLQRSGEVPPQKLQALQRVLQSEFCNAVREVYEHVYETVDISSSPEVRANATAKATVAAFAASEGHSHPRVVELPKTEEGLGFNIMGGKEQNSPIYISRIIPGGIADRHGGLKRGDQLLSVNGVSVEGEHHEKAVELLKAAQGKVKLVVRYTPKVLEEMESRFEKMRSAKRRQQT</sequence>